<keyword id="KW-0030">Aminoacyl-tRNA synthetase</keyword>
<keyword id="KW-0067">ATP-binding</keyword>
<keyword id="KW-0963">Cytoplasm</keyword>
<keyword id="KW-0436">Ligase</keyword>
<keyword id="KW-0460">Magnesium</keyword>
<keyword id="KW-0479">Metal-binding</keyword>
<keyword id="KW-0547">Nucleotide-binding</keyword>
<keyword id="KW-0648">Protein biosynthesis</keyword>
<keyword id="KW-0694">RNA-binding</keyword>
<keyword id="KW-0820">tRNA-binding</keyword>
<name>SYFB_BACCZ</name>
<gene>
    <name evidence="1" type="primary">pheT</name>
    <name type="ordered locus">BCE33L4303</name>
</gene>
<evidence type="ECO:0000255" key="1">
    <source>
        <dbReference type="HAMAP-Rule" id="MF_00283"/>
    </source>
</evidence>
<accession>Q633N5</accession>
<sequence>MFVSYRWLQEYVDIKDVTAQELADKITKSGIEVEGVEVLNKGVKGVVVGHVLECEKHPEADKLSKCLIDIGEEEPVQIICGAANIAKGLKVPVAKVGAVLPGNFKIKKAKLRGEASHGMVCALQELGIDGKLVSKEYADGIFIFPSDAEVGADALEILNLHDEVLELGLTPNRADCLNMLGVAYEVAAIYGREVKLPAIDLQETAEKTSDYISVSVEAKEENPLYIAKMVKNVKIGPSPMWMQTRLMAAGIRPISNVVDITNYILMEYGQPLHAFDYDKLGSKEIVVRLAKEGEKIETLDDQERTLQSHHLVITNGTKALAVAGVMGGADSEVTNETVNVLIESAYFAGQTVRRTSKDLGLRSESSARFEKGIDPTRTFEAIQHAAALMAKYAGGEALEGVVEADNLQVQERTVSVTAEKVNRVLGTNISASEMGTMFTNLKFPFTEVEGTFHVNVPARRPDITISEDLVEEVGRLYGYDHIPVTLPSGTMTRGKLTAAQTKRRKVRRFLEGAGLYEAITYSLTSADKAKQYMVEPNEKAPVALALPMSEERSQLRLSLVPQLLEAVSYNVARKNDSVALYEVGSIFLPTEEGELPKEEQHLAGVMTGLALHHAWQGEKKVVDFFVVKGVLEGLFDVLGVSNQITYAPAKREGMHPGRTADIVLDGEVIGFIGQLHPEAEKQLDVKNTFVFELSLVKVFGTDAEETYYSAIPRFPSMTRDMAVVVTKETKAGEMKQVIAEAGGELLKDVTLFDLYEGEKMEEGKKSLAFSMNYFDPERTLTDEEVTEAHNRVLTAVEEKFGAELRK</sequence>
<reference key="1">
    <citation type="journal article" date="2006" name="J. Bacteriol.">
        <title>Pathogenomic sequence analysis of Bacillus cereus and Bacillus thuringiensis isolates closely related to Bacillus anthracis.</title>
        <authorList>
            <person name="Han C.S."/>
            <person name="Xie G."/>
            <person name="Challacombe J.F."/>
            <person name="Altherr M.R."/>
            <person name="Bhotika S.S."/>
            <person name="Bruce D."/>
            <person name="Campbell C.S."/>
            <person name="Campbell M.L."/>
            <person name="Chen J."/>
            <person name="Chertkov O."/>
            <person name="Cleland C."/>
            <person name="Dimitrijevic M."/>
            <person name="Doggett N.A."/>
            <person name="Fawcett J.J."/>
            <person name="Glavina T."/>
            <person name="Goodwin L.A."/>
            <person name="Hill K.K."/>
            <person name="Hitchcock P."/>
            <person name="Jackson P.J."/>
            <person name="Keim P."/>
            <person name="Kewalramani A.R."/>
            <person name="Longmire J."/>
            <person name="Lucas S."/>
            <person name="Malfatti S."/>
            <person name="McMurry K."/>
            <person name="Meincke L.J."/>
            <person name="Misra M."/>
            <person name="Moseman B.L."/>
            <person name="Mundt M."/>
            <person name="Munk A.C."/>
            <person name="Okinaka R.T."/>
            <person name="Parson-Quintana B."/>
            <person name="Reilly L.P."/>
            <person name="Richardson P."/>
            <person name="Robinson D.L."/>
            <person name="Rubin E."/>
            <person name="Saunders E."/>
            <person name="Tapia R."/>
            <person name="Tesmer J.G."/>
            <person name="Thayer N."/>
            <person name="Thompson L.S."/>
            <person name="Tice H."/>
            <person name="Ticknor L.O."/>
            <person name="Wills P.L."/>
            <person name="Brettin T.S."/>
            <person name="Gilna P."/>
        </authorList>
    </citation>
    <scope>NUCLEOTIDE SEQUENCE [LARGE SCALE GENOMIC DNA]</scope>
    <source>
        <strain>ZK / E33L</strain>
    </source>
</reference>
<proteinExistence type="inferred from homology"/>
<dbReference type="EC" id="6.1.1.20" evidence="1"/>
<dbReference type="EMBL" id="CP000001">
    <property type="protein sequence ID" value="AAU15966.1"/>
    <property type="molecule type" value="Genomic_DNA"/>
</dbReference>
<dbReference type="RefSeq" id="WP_000498181.1">
    <property type="nucleotide sequence ID" value="NC_006274.1"/>
</dbReference>
<dbReference type="SMR" id="Q633N5"/>
<dbReference type="KEGG" id="bcz:BCE33L4303"/>
<dbReference type="PATRIC" id="fig|288681.22.peg.1071"/>
<dbReference type="Proteomes" id="UP000002612">
    <property type="component" value="Chromosome"/>
</dbReference>
<dbReference type="GO" id="GO:0009328">
    <property type="term" value="C:phenylalanine-tRNA ligase complex"/>
    <property type="evidence" value="ECO:0007669"/>
    <property type="project" value="TreeGrafter"/>
</dbReference>
<dbReference type="GO" id="GO:0005524">
    <property type="term" value="F:ATP binding"/>
    <property type="evidence" value="ECO:0007669"/>
    <property type="project" value="UniProtKB-UniRule"/>
</dbReference>
<dbReference type="GO" id="GO:0140096">
    <property type="term" value="F:catalytic activity, acting on a protein"/>
    <property type="evidence" value="ECO:0007669"/>
    <property type="project" value="UniProtKB-ARBA"/>
</dbReference>
<dbReference type="GO" id="GO:0000287">
    <property type="term" value="F:magnesium ion binding"/>
    <property type="evidence" value="ECO:0007669"/>
    <property type="project" value="UniProtKB-UniRule"/>
</dbReference>
<dbReference type="GO" id="GO:0004826">
    <property type="term" value="F:phenylalanine-tRNA ligase activity"/>
    <property type="evidence" value="ECO:0007669"/>
    <property type="project" value="UniProtKB-UniRule"/>
</dbReference>
<dbReference type="GO" id="GO:0016740">
    <property type="term" value="F:transferase activity"/>
    <property type="evidence" value="ECO:0007669"/>
    <property type="project" value="UniProtKB-ARBA"/>
</dbReference>
<dbReference type="GO" id="GO:0000049">
    <property type="term" value="F:tRNA binding"/>
    <property type="evidence" value="ECO:0007669"/>
    <property type="project" value="UniProtKB-KW"/>
</dbReference>
<dbReference type="GO" id="GO:0006432">
    <property type="term" value="P:phenylalanyl-tRNA aminoacylation"/>
    <property type="evidence" value="ECO:0007669"/>
    <property type="project" value="UniProtKB-UniRule"/>
</dbReference>
<dbReference type="CDD" id="cd00769">
    <property type="entry name" value="PheRS_beta_core"/>
    <property type="match status" value="1"/>
</dbReference>
<dbReference type="CDD" id="cd02796">
    <property type="entry name" value="tRNA_bind_bactPheRS"/>
    <property type="match status" value="1"/>
</dbReference>
<dbReference type="FunFam" id="2.40.50.140:FF:000045">
    <property type="entry name" value="Phenylalanine--tRNA ligase beta subunit"/>
    <property type="match status" value="1"/>
</dbReference>
<dbReference type="FunFam" id="3.30.56.10:FF:000002">
    <property type="entry name" value="Phenylalanine--tRNA ligase beta subunit"/>
    <property type="match status" value="1"/>
</dbReference>
<dbReference type="FunFam" id="3.30.70.380:FF:000001">
    <property type="entry name" value="Phenylalanine--tRNA ligase beta subunit"/>
    <property type="match status" value="1"/>
</dbReference>
<dbReference type="FunFam" id="3.30.930.10:FF:000022">
    <property type="entry name" value="Phenylalanine--tRNA ligase beta subunit"/>
    <property type="match status" value="1"/>
</dbReference>
<dbReference type="FunFam" id="3.50.40.10:FF:000001">
    <property type="entry name" value="Phenylalanine--tRNA ligase beta subunit"/>
    <property type="match status" value="1"/>
</dbReference>
<dbReference type="Gene3D" id="3.30.56.10">
    <property type="match status" value="2"/>
</dbReference>
<dbReference type="Gene3D" id="3.30.930.10">
    <property type="entry name" value="Bira Bifunctional Protein, Domain 2"/>
    <property type="match status" value="1"/>
</dbReference>
<dbReference type="Gene3D" id="3.30.70.380">
    <property type="entry name" value="Ferrodoxin-fold anticodon-binding domain"/>
    <property type="match status" value="1"/>
</dbReference>
<dbReference type="Gene3D" id="2.40.50.140">
    <property type="entry name" value="Nucleic acid-binding proteins"/>
    <property type="match status" value="1"/>
</dbReference>
<dbReference type="Gene3D" id="3.50.40.10">
    <property type="entry name" value="Phenylalanyl-trna Synthetase, Chain B, domain 3"/>
    <property type="match status" value="1"/>
</dbReference>
<dbReference type="HAMAP" id="MF_00283">
    <property type="entry name" value="Phe_tRNA_synth_beta1"/>
    <property type="match status" value="1"/>
</dbReference>
<dbReference type="InterPro" id="IPR045864">
    <property type="entry name" value="aa-tRNA-synth_II/BPL/LPL"/>
</dbReference>
<dbReference type="InterPro" id="IPR005146">
    <property type="entry name" value="B3/B4_tRNA-bd"/>
</dbReference>
<dbReference type="InterPro" id="IPR009061">
    <property type="entry name" value="DNA-bd_dom_put_sf"/>
</dbReference>
<dbReference type="InterPro" id="IPR005121">
    <property type="entry name" value="Fdx_antiC-bd"/>
</dbReference>
<dbReference type="InterPro" id="IPR036690">
    <property type="entry name" value="Fdx_antiC-bd_sf"/>
</dbReference>
<dbReference type="InterPro" id="IPR012340">
    <property type="entry name" value="NA-bd_OB-fold"/>
</dbReference>
<dbReference type="InterPro" id="IPR045060">
    <property type="entry name" value="Phe-tRNA-ligase_IIc_bsu"/>
</dbReference>
<dbReference type="InterPro" id="IPR004532">
    <property type="entry name" value="Phe-tRNA-ligase_IIc_bsu_bact"/>
</dbReference>
<dbReference type="InterPro" id="IPR020825">
    <property type="entry name" value="Phe-tRNA_synthase-like_B3/B4"/>
</dbReference>
<dbReference type="InterPro" id="IPR041616">
    <property type="entry name" value="PheRS_beta_core"/>
</dbReference>
<dbReference type="InterPro" id="IPR002547">
    <property type="entry name" value="tRNA-bd_dom"/>
</dbReference>
<dbReference type="InterPro" id="IPR033714">
    <property type="entry name" value="tRNA_bind_bactPheRS"/>
</dbReference>
<dbReference type="InterPro" id="IPR005147">
    <property type="entry name" value="tRNA_synthase_B5-dom"/>
</dbReference>
<dbReference type="NCBIfam" id="TIGR00472">
    <property type="entry name" value="pheT_bact"/>
    <property type="match status" value="1"/>
</dbReference>
<dbReference type="NCBIfam" id="NF045760">
    <property type="entry name" value="YtpR"/>
    <property type="match status" value="1"/>
</dbReference>
<dbReference type="PANTHER" id="PTHR10947:SF0">
    <property type="entry name" value="PHENYLALANINE--TRNA LIGASE BETA SUBUNIT"/>
    <property type="match status" value="1"/>
</dbReference>
<dbReference type="PANTHER" id="PTHR10947">
    <property type="entry name" value="PHENYLALANYL-TRNA SYNTHETASE BETA CHAIN AND LEUCINE-RICH REPEAT-CONTAINING PROTEIN 47"/>
    <property type="match status" value="1"/>
</dbReference>
<dbReference type="Pfam" id="PF03483">
    <property type="entry name" value="B3_4"/>
    <property type="match status" value="1"/>
</dbReference>
<dbReference type="Pfam" id="PF03484">
    <property type="entry name" value="B5"/>
    <property type="match status" value="1"/>
</dbReference>
<dbReference type="Pfam" id="PF03147">
    <property type="entry name" value="FDX-ACB"/>
    <property type="match status" value="1"/>
</dbReference>
<dbReference type="Pfam" id="PF01588">
    <property type="entry name" value="tRNA_bind"/>
    <property type="match status" value="1"/>
</dbReference>
<dbReference type="Pfam" id="PF17759">
    <property type="entry name" value="tRNA_synthFbeta"/>
    <property type="match status" value="1"/>
</dbReference>
<dbReference type="SMART" id="SM00873">
    <property type="entry name" value="B3_4"/>
    <property type="match status" value="1"/>
</dbReference>
<dbReference type="SMART" id="SM00874">
    <property type="entry name" value="B5"/>
    <property type="match status" value="1"/>
</dbReference>
<dbReference type="SMART" id="SM00896">
    <property type="entry name" value="FDX-ACB"/>
    <property type="match status" value="1"/>
</dbReference>
<dbReference type="SUPFAM" id="SSF54991">
    <property type="entry name" value="Anticodon-binding domain of PheRS"/>
    <property type="match status" value="1"/>
</dbReference>
<dbReference type="SUPFAM" id="SSF55681">
    <property type="entry name" value="Class II aaRS and biotin synthetases"/>
    <property type="match status" value="1"/>
</dbReference>
<dbReference type="SUPFAM" id="SSF50249">
    <property type="entry name" value="Nucleic acid-binding proteins"/>
    <property type="match status" value="1"/>
</dbReference>
<dbReference type="SUPFAM" id="SSF56037">
    <property type="entry name" value="PheT/TilS domain"/>
    <property type="match status" value="1"/>
</dbReference>
<dbReference type="SUPFAM" id="SSF46955">
    <property type="entry name" value="Putative DNA-binding domain"/>
    <property type="match status" value="1"/>
</dbReference>
<dbReference type="PROSITE" id="PS51483">
    <property type="entry name" value="B5"/>
    <property type="match status" value="1"/>
</dbReference>
<dbReference type="PROSITE" id="PS51447">
    <property type="entry name" value="FDX_ACB"/>
    <property type="match status" value="1"/>
</dbReference>
<dbReference type="PROSITE" id="PS50886">
    <property type="entry name" value="TRBD"/>
    <property type="match status" value="1"/>
</dbReference>
<comment type="catalytic activity">
    <reaction evidence="1">
        <text>tRNA(Phe) + L-phenylalanine + ATP = L-phenylalanyl-tRNA(Phe) + AMP + diphosphate + H(+)</text>
        <dbReference type="Rhea" id="RHEA:19413"/>
        <dbReference type="Rhea" id="RHEA-COMP:9668"/>
        <dbReference type="Rhea" id="RHEA-COMP:9699"/>
        <dbReference type="ChEBI" id="CHEBI:15378"/>
        <dbReference type="ChEBI" id="CHEBI:30616"/>
        <dbReference type="ChEBI" id="CHEBI:33019"/>
        <dbReference type="ChEBI" id="CHEBI:58095"/>
        <dbReference type="ChEBI" id="CHEBI:78442"/>
        <dbReference type="ChEBI" id="CHEBI:78531"/>
        <dbReference type="ChEBI" id="CHEBI:456215"/>
        <dbReference type="EC" id="6.1.1.20"/>
    </reaction>
</comment>
<comment type="cofactor">
    <cofactor evidence="1">
        <name>Mg(2+)</name>
        <dbReference type="ChEBI" id="CHEBI:18420"/>
    </cofactor>
    <text evidence="1">Binds 2 magnesium ions per tetramer.</text>
</comment>
<comment type="subunit">
    <text evidence="1">Tetramer of two alpha and two beta subunits.</text>
</comment>
<comment type="subcellular location">
    <subcellularLocation>
        <location evidence="1">Cytoplasm</location>
    </subcellularLocation>
</comment>
<comment type="similarity">
    <text evidence="1">Belongs to the phenylalanyl-tRNA synthetase beta subunit family. Type 1 subfamily.</text>
</comment>
<protein>
    <recommendedName>
        <fullName evidence="1">Phenylalanine--tRNA ligase beta subunit</fullName>
        <ecNumber evidence="1">6.1.1.20</ecNumber>
    </recommendedName>
    <alternativeName>
        <fullName evidence="1">Phenylalanyl-tRNA synthetase beta subunit</fullName>
        <shortName evidence="1">PheRS</shortName>
    </alternativeName>
</protein>
<organism>
    <name type="scientific">Bacillus cereus (strain ZK / E33L)</name>
    <dbReference type="NCBI Taxonomy" id="288681"/>
    <lineage>
        <taxon>Bacteria</taxon>
        <taxon>Bacillati</taxon>
        <taxon>Bacillota</taxon>
        <taxon>Bacilli</taxon>
        <taxon>Bacillales</taxon>
        <taxon>Bacillaceae</taxon>
        <taxon>Bacillus</taxon>
        <taxon>Bacillus cereus group</taxon>
    </lineage>
</organism>
<feature type="chain" id="PRO_0000126839" description="Phenylalanine--tRNA ligase beta subunit">
    <location>
        <begin position="1"/>
        <end position="806"/>
    </location>
</feature>
<feature type="domain" description="tRNA-binding" evidence="1">
    <location>
        <begin position="40"/>
        <end position="155"/>
    </location>
</feature>
<feature type="domain" description="B5" evidence="1">
    <location>
        <begin position="409"/>
        <end position="484"/>
    </location>
</feature>
<feature type="domain" description="FDX-ACB" evidence="1">
    <location>
        <begin position="712"/>
        <end position="805"/>
    </location>
</feature>
<feature type="binding site" evidence="1">
    <location>
        <position position="462"/>
    </location>
    <ligand>
        <name>Mg(2+)</name>
        <dbReference type="ChEBI" id="CHEBI:18420"/>
        <note>shared with alpha subunit</note>
    </ligand>
</feature>
<feature type="binding site" evidence="1">
    <location>
        <position position="468"/>
    </location>
    <ligand>
        <name>Mg(2+)</name>
        <dbReference type="ChEBI" id="CHEBI:18420"/>
        <note>shared with alpha subunit</note>
    </ligand>
</feature>
<feature type="binding site" evidence="1">
    <location>
        <position position="471"/>
    </location>
    <ligand>
        <name>Mg(2+)</name>
        <dbReference type="ChEBI" id="CHEBI:18420"/>
        <note>shared with alpha subunit</note>
    </ligand>
</feature>
<feature type="binding site" evidence="1">
    <location>
        <position position="472"/>
    </location>
    <ligand>
        <name>Mg(2+)</name>
        <dbReference type="ChEBI" id="CHEBI:18420"/>
        <note>shared with alpha subunit</note>
    </ligand>
</feature>